<reference key="1">
    <citation type="journal article" date="2001" name="Mol. Cell. Biol.">
        <title>The CELF family of RNA binding proteins is implicated in cell-specific and developmentally regulated alternative splicing.</title>
        <authorList>
            <person name="Ladd A.N."/>
            <person name="Charlet-B N."/>
            <person name="Cooper T.A."/>
        </authorList>
    </citation>
    <scope>NUCLEOTIDE SEQUENCE [MRNA] (ISOFORM 1)</scope>
    <scope>FUNCTION</scope>
    <scope>RNA-BINDING</scope>
    <scope>TISSUE SPECIFICITY</scope>
    <source>
        <tissue>Brain</tissue>
    </source>
</reference>
<reference key="2">
    <citation type="journal article" date="2004" name="Nat. Genet.">
        <title>Complete sequencing and characterization of 21,243 full-length human cDNAs.</title>
        <authorList>
            <person name="Ota T."/>
            <person name="Suzuki Y."/>
            <person name="Nishikawa T."/>
            <person name="Otsuki T."/>
            <person name="Sugiyama T."/>
            <person name="Irie R."/>
            <person name="Wakamatsu A."/>
            <person name="Hayashi K."/>
            <person name="Sato H."/>
            <person name="Nagai K."/>
            <person name="Kimura K."/>
            <person name="Makita H."/>
            <person name="Sekine M."/>
            <person name="Obayashi M."/>
            <person name="Nishi T."/>
            <person name="Shibahara T."/>
            <person name="Tanaka T."/>
            <person name="Ishii S."/>
            <person name="Yamamoto J."/>
            <person name="Saito K."/>
            <person name="Kawai Y."/>
            <person name="Isono Y."/>
            <person name="Nakamura Y."/>
            <person name="Nagahari K."/>
            <person name="Murakami K."/>
            <person name="Yasuda T."/>
            <person name="Iwayanagi T."/>
            <person name="Wagatsuma M."/>
            <person name="Shiratori A."/>
            <person name="Sudo H."/>
            <person name="Hosoiri T."/>
            <person name="Kaku Y."/>
            <person name="Kodaira H."/>
            <person name="Kondo H."/>
            <person name="Sugawara M."/>
            <person name="Takahashi M."/>
            <person name="Kanda K."/>
            <person name="Yokoi T."/>
            <person name="Furuya T."/>
            <person name="Kikkawa E."/>
            <person name="Omura Y."/>
            <person name="Abe K."/>
            <person name="Kamihara K."/>
            <person name="Katsuta N."/>
            <person name="Sato K."/>
            <person name="Tanikawa M."/>
            <person name="Yamazaki M."/>
            <person name="Ninomiya K."/>
            <person name="Ishibashi T."/>
            <person name="Yamashita H."/>
            <person name="Murakawa K."/>
            <person name="Fujimori K."/>
            <person name="Tanai H."/>
            <person name="Kimata M."/>
            <person name="Watanabe M."/>
            <person name="Hiraoka S."/>
            <person name="Chiba Y."/>
            <person name="Ishida S."/>
            <person name="Ono Y."/>
            <person name="Takiguchi S."/>
            <person name="Watanabe S."/>
            <person name="Yosida M."/>
            <person name="Hotuta T."/>
            <person name="Kusano J."/>
            <person name="Kanehori K."/>
            <person name="Takahashi-Fujii A."/>
            <person name="Hara H."/>
            <person name="Tanase T.-O."/>
            <person name="Nomura Y."/>
            <person name="Togiya S."/>
            <person name="Komai F."/>
            <person name="Hara R."/>
            <person name="Takeuchi K."/>
            <person name="Arita M."/>
            <person name="Imose N."/>
            <person name="Musashino K."/>
            <person name="Yuuki H."/>
            <person name="Oshima A."/>
            <person name="Sasaki N."/>
            <person name="Aotsuka S."/>
            <person name="Yoshikawa Y."/>
            <person name="Matsunawa H."/>
            <person name="Ichihara T."/>
            <person name="Shiohata N."/>
            <person name="Sano S."/>
            <person name="Moriya S."/>
            <person name="Momiyama H."/>
            <person name="Satoh N."/>
            <person name="Takami S."/>
            <person name="Terashima Y."/>
            <person name="Suzuki O."/>
            <person name="Nakagawa S."/>
            <person name="Senoh A."/>
            <person name="Mizoguchi H."/>
            <person name="Goto Y."/>
            <person name="Shimizu F."/>
            <person name="Wakebe H."/>
            <person name="Hishigaki H."/>
            <person name="Watanabe T."/>
            <person name="Sugiyama A."/>
            <person name="Takemoto M."/>
            <person name="Kawakami B."/>
            <person name="Yamazaki M."/>
            <person name="Watanabe K."/>
            <person name="Kumagai A."/>
            <person name="Itakura S."/>
            <person name="Fukuzumi Y."/>
            <person name="Fujimori Y."/>
            <person name="Komiyama M."/>
            <person name="Tashiro H."/>
            <person name="Tanigami A."/>
            <person name="Fujiwara T."/>
            <person name="Ono T."/>
            <person name="Yamada K."/>
            <person name="Fujii Y."/>
            <person name="Ozaki K."/>
            <person name="Hirao M."/>
            <person name="Ohmori Y."/>
            <person name="Kawabata A."/>
            <person name="Hikiji T."/>
            <person name="Kobatake N."/>
            <person name="Inagaki H."/>
            <person name="Ikema Y."/>
            <person name="Okamoto S."/>
            <person name="Okitani R."/>
            <person name="Kawakami T."/>
            <person name="Noguchi S."/>
            <person name="Itoh T."/>
            <person name="Shigeta K."/>
            <person name="Senba T."/>
            <person name="Matsumura K."/>
            <person name="Nakajima Y."/>
            <person name="Mizuno T."/>
            <person name="Morinaga M."/>
            <person name="Sasaki M."/>
            <person name="Togashi T."/>
            <person name="Oyama M."/>
            <person name="Hata H."/>
            <person name="Watanabe M."/>
            <person name="Komatsu T."/>
            <person name="Mizushima-Sugano J."/>
            <person name="Satoh T."/>
            <person name="Shirai Y."/>
            <person name="Takahashi Y."/>
            <person name="Nakagawa K."/>
            <person name="Okumura K."/>
            <person name="Nagase T."/>
            <person name="Nomura N."/>
            <person name="Kikuchi H."/>
            <person name="Masuho Y."/>
            <person name="Yamashita R."/>
            <person name="Nakai K."/>
            <person name="Yada T."/>
            <person name="Nakamura Y."/>
            <person name="Ohara O."/>
            <person name="Isogai T."/>
            <person name="Sugano S."/>
        </authorList>
    </citation>
    <scope>NUCLEOTIDE SEQUENCE [LARGE SCALE MRNA] (ISOFORM 3)</scope>
    <source>
        <tissue>Embryo</tissue>
    </source>
</reference>
<reference key="3">
    <citation type="submission" date="2005-03" db="EMBL/GenBank/DDBJ databases">
        <authorList>
            <person name="Totoki Y."/>
            <person name="Toyoda A."/>
            <person name="Takeda T."/>
            <person name="Sakaki Y."/>
            <person name="Tanaka A."/>
            <person name="Yokoyama S."/>
            <person name="Ohara O."/>
            <person name="Nagase T."/>
            <person name="Kikuno R.F."/>
        </authorList>
    </citation>
    <scope>NUCLEOTIDE SEQUENCE [LARGE SCALE MRNA] (ISOFORM 4)</scope>
    <source>
        <tissue>Brain</tissue>
    </source>
</reference>
<reference key="4">
    <citation type="journal article" date="2004" name="Genome Res.">
        <title>The status, quality, and expansion of the NIH full-length cDNA project: the Mammalian Gene Collection (MGC).</title>
        <authorList>
            <consortium name="The MGC Project Team"/>
        </authorList>
    </citation>
    <scope>NUCLEOTIDE SEQUENCE [LARGE SCALE MRNA] (ISOFORMS 2 AND 5)</scope>
    <source>
        <tissue>Brain</tissue>
        <tissue>Lung</tissue>
    </source>
</reference>
<reference key="5">
    <citation type="journal article" date="2000" name="J. Biol. Chem.">
        <title>A family of human RNA-binding proteins related to the Drosophila Bruno translational regulator.</title>
        <authorList>
            <person name="Good P.J."/>
            <person name="Chen Q."/>
            <person name="Warner S.J."/>
            <person name="Herring D.C."/>
        </authorList>
    </citation>
    <scope>NUCLEOTIDE SEQUENCE [MRNA] OF 1-304 (ISOFORM 5)</scope>
    <scope>NUCLEOTIDE SEQUENCE [MRNA] OF 324-486 (ISOFORMS 1/3/4)</scope>
</reference>
<reference key="6">
    <citation type="journal article" date="2002" name="Cytogenet. Genome Res.">
        <title>Identification and characterization of murine Brunol4, a new member of the elav/bruno family.</title>
        <authorList>
            <person name="Meins M."/>
            <person name="Schlickum S."/>
            <person name="Wilhelm C."/>
            <person name="Missbach J."/>
            <person name="Yadav S."/>
            <person name="Glaeser B."/>
            <person name="Grzmil M."/>
            <person name="Burfeind P."/>
            <person name="Laccone F."/>
        </authorList>
    </citation>
    <scope>TISSUE SPECIFICITY</scope>
</reference>
<reference key="7">
    <citation type="journal article" date="2003" name="RNA">
        <title>Antagonistic regulation of alpha-actinin alternative splicing by CELF proteins and polypyrimidine tract binding protein.</title>
        <authorList>
            <person name="Gromak N."/>
            <person name="Matlin A.J."/>
            <person name="Cooper T.A."/>
            <person name="Smith C.W."/>
        </authorList>
    </citation>
    <scope>FUNCTION</scope>
</reference>
<reference key="8">
    <citation type="journal article" date="2004" name="J. Neurochem.">
        <title>Tau exon 10, whose missplicing causes frontotemporal dementia, is regulated by an intricate interplay of cis elements and trans factors.</title>
        <authorList>
            <person name="Wang J."/>
            <person name="Gao Q.S."/>
            <person name="Wang Y."/>
            <person name="Lafyatis R."/>
            <person name="Stamm S."/>
            <person name="Andreadis A."/>
        </authorList>
    </citation>
    <scope>FUNCTION</scope>
</reference>
<reference key="9">
    <citation type="journal article" date="2004" name="Nucleic Acids Res.">
        <title>ETR-3 and CELF4 protein domains required for RNA binding and splicing activity in vivo.</title>
        <authorList>
            <person name="Singh G."/>
            <person name="Charlet-B N."/>
            <person name="Han J."/>
            <person name="Cooper T.A."/>
        </authorList>
    </citation>
    <scope>FUNCTION</scope>
    <scope>SUBCELLULAR LOCATION</scope>
    <scope>RNA-BINDING</scope>
</reference>
<reference key="10">
    <citation type="journal article" date="2005" name="Nucleic Acids Res.">
        <title>Identification of CELF splicing activation and repression domains in vivo.</title>
        <authorList>
            <person name="Han J."/>
            <person name="Cooper T.A."/>
        </authorList>
    </citation>
    <scope>FUNCTION</scope>
    <scope>RNA-BINDING</scope>
</reference>
<reference key="11">
    <citation type="journal article" date="2006" name="J. Neurosci. Res.">
        <title>ETR-3 represses Tau exons 2/3 inclusion, a splicing event abnormally enhanced in myotonic dystrophy type I.</title>
        <authorList>
            <person name="Leroy O."/>
            <person name="Dhaenens C.-M."/>
            <person name="Schraen-Maschke S."/>
            <person name="Belarbi K."/>
            <person name="Delacourte A."/>
            <person name="Andreadis A."/>
            <person name="Sablonniere B."/>
            <person name="Buee L."/>
            <person name="Sergeant N."/>
            <person name="Caillet-Boudin M.-L."/>
        </authorList>
    </citation>
    <scope>TISSUE SPECIFICITY</scope>
</reference>
<reference key="12">
    <citation type="submission" date="2006-10" db="PDB data bank">
        <title>Solution structure of RNA-binding domain in Bruno-like 4 RNA-binding protein.</title>
        <authorList>
            <consortium name="RIKEN structural genomics initiative (RSGI)"/>
        </authorList>
    </citation>
    <scope>STRUCTURE BY NMR OF 143-235</scope>
</reference>
<protein>
    <recommendedName>
        <fullName>CUGBP Elav-like family member 4</fullName>
        <shortName>CELF-4</shortName>
    </recommendedName>
    <alternativeName>
        <fullName>Bruno-like protein 4</fullName>
    </alternativeName>
    <alternativeName>
        <fullName>CUG-BP- and ETR-3-like factor 4</fullName>
    </alternativeName>
    <alternativeName>
        <fullName>RNA-binding protein BRUNOL-4</fullName>
    </alternativeName>
</protein>
<accession>Q9BZC1</accession>
<accession>Q59EN7</accession>
<accession>Q86XB9</accession>
<accession>Q8N2M6</accession>
<accession>Q9BQ96</accession>
<accession>Q9NR84</accession>
<accession>Q9NR85</accession>
<name>CELF4_HUMAN</name>
<feature type="chain" id="PRO_0000295221" description="CUGBP Elav-like family member 4">
    <location>
        <begin position="1"/>
        <end position="486"/>
    </location>
</feature>
<feature type="domain" description="RRM 1" evidence="1">
    <location>
        <begin position="54"/>
        <end position="135"/>
    </location>
</feature>
<feature type="domain" description="RRM 2" evidence="1">
    <location>
        <begin position="152"/>
        <end position="232"/>
    </location>
</feature>
<feature type="domain" description="RRM 3" evidence="1">
    <location>
        <begin position="404"/>
        <end position="479"/>
    </location>
</feature>
<feature type="region of interest" description="Sufficient for RNA-binding and MSE-dependent splicing activity">
    <location>
        <begin position="1"/>
        <end position="298"/>
    </location>
</feature>
<feature type="region of interest" description="Disordered" evidence="2">
    <location>
        <begin position="18"/>
        <end position="39"/>
    </location>
</feature>
<feature type="region of interest" description="Disordered" evidence="2">
    <location>
        <begin position="121"/>
        <end position="149"/>
    </location>
</feature>
<feature type="region of interest" description="Necessary for TNNT2 exon 5 inclusion">
    <location>
        <begin position="239"/>
        <end position="258"/>
    </location>
</feature>
<feature type="compositionally biased region" description="Polar residues" evidence="2">
    <location>
        <begin position="18"/>
        <end position="28"/>
    </location>
</feature>
<feature type="compositionally biased region" description="Polar residues" evidence="2">
    <location>
        <begin position="138"/>
        <end position="149"/>
    </location>
</feature>
<feature type="splice variant" id="VSP_026828" description="In isoform 5." evidence="10 12">
    <original>GSSCLRQPPSQ</original>
    <variation>E</variation>
    <location>
        <begin position="140"/>
        <end position="150"/>
    </location>
</feature>
<feature type="splice variant" id="VSP_026829" description="In isoform 2 and isoform 3." evidence="11 12">
    <original>QD</original>
    <variation>H</variation>
    <location>
        <begin position="150"/>
        <end position="151"/>
    </location>
</feature>
<feature type="splice variant" id="VSP_026830" description="In isoform 3 and isoform 4." evidence="11 13">
    <location>
        <position position="268"/>
    </location>
</feature>
<feature type="splice variant" id="VSP_026831" description="In isoform 2." evidence="12">
    <original>GP</original>
    <variation>A</variation>
    <location>
        <begin position="388"/>
        <end position="389"/>
    </location>
</feature>
<feature type="splice variant" id="VSP_026832" description="In isoform 5." evidence="10 12">
    <location>
        <begin position="417"/>
        <end position="444"/>
    </location>
</feature>
<feature type="sequence variant" id="VAR_052203" description="In dbSNP:rs12458669.">
    <original>G</original>
    <variation>S</variation>
    <location>
        <position position="388"/>
    </location>
</feature>
<feature type="sequence conflict" description="In Ref. 2; BAC11082." evidence="14" ref="2">
    <original>Q</original>
    <variation>R</variation>
    <location>
        <position position="60"/>
    </location>
</feature>
<feature type="sequence conflict" description="In Ref. 2; BAC11082." evidence="14" ref="2">
    <original>D</original>
    <variation>E</variation>
    <location>
        <position position="166"/>
    </location>
</feature>
<feature type="sequence conflict" description="In Ref. 2; BAC11082." evidence="14" ref="2">
    <original>S</original>
    <variation>G</variation>
    <location>
        <position position="215"/>
    </location>
</feature>
<feature type="sequence conflict" description="In Ref. 2; BAC11082." evidence="14" ref="2">
    <original>T</original>
    <variation>M</variation>
    <location>
        <position position="237"/>
    </location>
</feature>
<feature type="strand" evidence="15">
    <location>
        <begin position="54"/>
        <end position="60"/>
    </location>
</feature>
<feature type="helix" evidence="15">
    <location>
        <begin position="67"/>
        <end position="77"/>
    </location>
</feature>
<feature type="strand" evidence="15">
    <location>
        <begin position="82"/>
        <end position="84"/>
    </location>
</feature>
<feature type="strand" evidence="15">
    <location>
        <begin position="89"/>
        <end position="91"/>
    </location>
</feature>
<feature type="strand" evidence="15">
    <location>
        <begin position="96"/>
        <end position="104"/>
    </location>
</feature>
<feature type="helix" evidence="15">
    <location>
        <begin position="105"/>
        <end position="115"/>
    </location>
</feature>
<feature type="turn" evidence="15">
    <location>
        <begin position="116"/>
        <end position="118"/>
    </location>
</feature>
<feature type="strand" evidence="15">
    <location>
        <begin position="129"/>
        <end position="132"/>
    </location>
</feature>
<feature type="strand" evidence="16">
    <location>
        <begin position="153"/>
        <end position="158"/>
    </location>
</feature>
<feature type="helix" evidence="16">
    <location>
        <begin position="165"/>
        <end position="173"/>
    </location>
</feature>
<feature type="strand" evidence="16">
    <location>
        <begin position="178"/>
        <end position="185"/>
    </location>
</feature>
<feature type="strand" evidence="16">
    <location>
        <begin position="189"/>
        <end position="201"/>
    </location>
</feature>
<feature type="helix" evidence="16">
    <location>
        <begin position="202"/>
        <end position="212"/>
    </location>
</feature>
<feature type="turn" evidence="16">
    <location>
        <begin position="213"/>
        <end position="215"/>
    </location>
</feature>
<feature type="strand" evidence="16">
    <location>
        <begin position="226"/>
        <end position="229"/>
    </location>
</feature>
<evidence type="ECO:0000255" key="1">
    <source>
        <dbReference type="PROSITE-ProRule" id="PRU00176"/>
    </source>
</evidence>
<evidence type="ECO:0000256" key="2">
    <source>
        <dbReference type="SAM" id="MobiDB-lite"/>
    </source>
</evidence>
<evidence type="ECO:0000269" key="3">
    <source>
    </source>
</evidence>
<evidence type="ECO:0000269" key="4">
    <source>
    </source>
</evidence>
<evidence type="ECO:0000269" key="5">
    <source>
    </source>
</evidence>
<evidence type="ECO:0000269" key="6">
    <source>
    </source>
</evidence>
<evidence type="ECO:0000269" key="7">
    <source>
    </source>
</evidence>
<evidence type="ECO:0000269" key="8">
    <source>
    </source>
</evidence>
<evidence type="ECO:0000269" key="9">
    <source>
    </source>
</evidence>
<evidence type="ECO:0000303" key="10">
    <source>
    </source>
</evidence>
<evidence type="ECO:0000303" key="11">
    <source>
    </source>
</evidence>
<evidence type="ECO:0000303" key="12">
    <source>
    </source>
</evidence>
<evidence type="ECO:0000303" key="13">
    <source ref="3"/>
</evidence>
<evidence type="ECO:0000305" key="14"/>
<evidence type="ECO:0007829" key="15">
    <source>
        <dbReference type="PDB" id="2DGP"/>
    </source>
</evidence>
<evidence type="ECO:0007829" key="16">
    <source>
        <dbReference type="PDB" id="2DNK"/>
    </source>
</evidence>
<gene>
    <name type="primary">CELF4</name>
    <name type="synonym">BRUNOL4</name>
</gene>
<proteinExistence type="evidence at protein level"/>
<comment type="function">
    <text evidence="3 5 6 7 8">RNA-binding protein implicated in the regulation of pre-mRNA alternative splicing. Mediates exon inclusion and/or exclusion in pre-mRNA that are subject to tissue-specific and developmentally regulated alternative splicing. Specifically activates exon 5 inclusion of cardiac isoforms of TNNT2 during heart remodeling at the juvenile to adult transition. Promotes exclusion of both the smooth muscle (SM) and non-muscle (NM) exons in actinin pre-mRNAs. Activates the splicing of MAPT/Tau exon 10. Binds to muscle-specific splicing enhancer (MSE) intronic sites flanking the alternative exon 5 of TNNT2 pre-mRNA.</text>
</comment>
<comment type="interaction">
    <interactant intactId="EBI-12818201">
        <id>Q9BZC1-2</id>
    </interactant>
    <interactant intactId="EBI-11983983">
        <id>P57721-2</id>
        <label>PCBP3</label>
    </interactant>
    <organismsDiffer>false</organismsDiffer>
    <experiments>3</experiments>
</comment>
<comment type="interaction">
    <interactant intactId="EBI-12818201">
        <id>Q9BZC1-2</id>
    </interactant>
    <interactant intactId="EBI-12754095">
        <id>P86480</id>
        <label>PRR20D</label>
    </interactant>
    <organismsDiffer>false</organismsDiffer>
    <experiments>3</experiments>
</comment>
<comment type="interaction">
    <interactant intactId="EBI-12818201">
        <id>Q9BZC1-2</id>
    </interactant>
    <interactant intactId="EBI-11987469">
        <id>Q6ZRY4</id>
        <label>RBPMS2</label>
    </interactant>
    <organismsDiffer>false</organismsDiffer>
    <experiments>3</experiments>
</comment>
<comment type="interaction">
    <interactant intactId="EBI-12818201">
        <id>Q9BZC1-2</id>
    </interactant>
    <interactant intactId="EBI-11064654">
        <id>Q01085-2</id>
        <label>TIAL1</label>
    </interactant>
    <organismsDiffer>false</organismsDiffer>
    <experiments>3</experiments>
</comment>
<comment type="subcellular location">
    <subcellularLocation>
        <location evidence="6">Nucleus</location>
    </subcellularLocation>
    <subcellularLocation>
        <location evidence="6">Cytoplasm</location>
    </subcellularLocation>
</comment>
<comment type="alternative products">
    <event type="alternative splicing"/>
    <isoform>
        <id>Q9BZC1-1</id>
        <name>1</name>
        <sequence type="displayed"/>
    </isoform>
    <isoform>
        <id>Q9BZC1-2</id>
        <name>2</name>
        <sequence type="described" ref="VSP_026829 VSP_026831"/>
    </isoform>
    <isoform>
        <id>Q9BZC1-3</id>
        <name>3</name>
        <sequence type="described" ref="VSP_026829 VSP_026830"/>
    </isoform>
    <isoform>
        <id>Q9BZC1-4</id>
        <name>4</name>
        <sequence type="described" ref="VSP_026830"/>
    </isoform>
    <isoform>
        <id>Q9BZC1-5</id>
        <name>5</name>
        <sequence type="described" ref="VSP_026828 VSP_026832"/>
    </isoform>
</comment>
<comment type="tissue specificity">
    <text evidence="3 4 9">Ubiquitous. Strongly expressed in the cerebellum, hippocampus, amygdala, temporal and frontal cortex and frontal lobes.</text>
</comment>
<comment type="similarity">
    <text evidence="14">Belongs to the CELF/BRUNOL family.</text>
</comment>
<comment type="sequence caution" evidence="14">
    <conflict type="erroneous initiation">
        <sequence resource="EMBL-CDS" id="BAD93011"/>
    </conflict>
</comment>
<sequence length="486" mass="51966">MYIKMATLANGQADNASLSTNGLGSSPGSAGHMNGLSHSPGNPSTIPMKDHDAIKLFIGQIPRNLDEKDLKPLFEEFGKIYELTVLKDRFTGMHKGCAFLTYCERESALKAQSALHEQKTLPGMNRPIQVKPADSESRGGSSCLRQPPSQDRKLFVGMLNKQQSEDDVRRLFEAFGNIEECTILRGPDGNSKGCAFVKYSSHAEAQAAINALHGSQTMPGASSSLVVKFADTDKERTMRRMQQMAGQMGMFNPMAIPFGAYGAYAQALMQQQAALMASVAQGGYLNPMAAFAAAQMQQMAALNMNGLAAAPMTPTSGGSTPPGITAPAVPSIPSPIGVNGFTGLPPQANGQPAAEAVFANGIHPYPAQSPTAADPLQQAYAGVQQYAGPAAYPAAYGQISQAFPQPPPMIPQQQREGPEGCNLFIYHLPQEFGDAELMQMFLPFGFVSFDNPASAQTAIQAMNGFQIGMKRLKVQLKRPKDANRPY</sequence>
<keyword id="KW-0002">3D-structure</keyword>
<keyword id="KW-0010">Activator</keyword>
<keyword id="KW-0025">Alternative splicing</keyword>
<keyword id="KW-0963">Cytoplasm</keyword>
<keyword id="KW-0507">mRNA processing</keyword>
<keyword id="KW-0508">mRNA splicing</keyword>
<keyword id="KW-0539">Nucleus</keyword>
<keyword id="KW-1267">Proteomics identification</keyword>
<keyword id="KW-1185">Reference proteome</keyword>
<keyword id="KW-0677">Repeat</keyword>
<keyword id="KW-0694">RNA-binding</keyword>
<organism>
    <name type="scientific">Homo sapiens</name>
    <name type="common">Human</name>
    <dbReference type="NCBI Taxonomy" id="9606"/>
    <lineage>
        <taxon>Eukaryota</taxon>
        <taxon>Metazoa</taxon>
        <taxon>Chordata</taxon>
        <taxon>Craniata</taxon>
        <taxon>Vertebrata</taxon>
        <taxon>Euteleostomi</taxon>
        <taxon>Mammalia</taxon>
        <taxon>Eutheria</taxon>
        <taxon>Euarchontoglires</taxon>
        <taxon>Primates</taxon>
        <taxon>Haplorrhini</taxon>
        <taxon>Catarrhini</taxon>
        <taxon>Hominidae</taxon>
        <taxon>Homo</taxon>
    </lineage>
</organism>
<dbReference type="EMBL" id="AF329265">
    <property type="protein sequence ID" value="AAK07475.1"/>
    <property type="molecule type" value="mRNA"/>
</dbReference>
<dbReference type="EMBL" id="AK074596">
    <property type="protein sequence ID" value="BAC11082.1"/>
    <property type="molecule type" value="mRNA"/>
</dbReference>
<dbReference type="EMBL" id="AB209774">
    <property type="protein sequence ID" value="BAD93011.1"/>
    <property type="status" value="ALT_INIT"/>
    <property type="molecule type" value="mRNA"/>
</dbReference>
<dbReference type="EMBL" id="BC001946">
    <property type="protein sequence ID" value="AAH01946.2"/>
    <property type="molecule type" value="mRNA"/>
</dbReference>
<dbReference type="EMBL" id="BC004167">
    <property type="protein sequence ID" value="AAH04167.2"/>
    <property type="molecule type" value="mRNA"/>
</dbReference>
<dbReference type="EMBL" id="BC045711">
    <property type="protein sequence ID" value="AAH45711.1"/>
    <property type="molecule type" value="mRNA"/>
</dbReference>
<dbReference type="EMBL" id="AF248650">
    <property type="protein sequence ID" value="AAF86232.1"/>
    <property type="molecule type" value="mRNA"/>
</dbReference>
<dbReference type="EMBL" id="AF248651">
    <property type="protein sequence ID" value="AAF86233.1"/>
    <property type="molecule type" value="mRNA"/>
</dbReference>
<dbReference type="CCDS" id="CCDS32818.1">
    <molecule id="Q9BZC1-1"/>
</dbReference>
<dbReference type="CCDS" id="CCDS45856.1">
    <molecule id="Q9BZC1-4"/>
</dbReference>
<dbReference type="CCDS" id="CCDS45857.1">
    <molecule id="Q9BZC1-3"/>
</dbReference>
<dbReference type="CCDS" id="CCDS45858.1">
    <molecule id="Q9BZC1-5"/>
</dbReference>
<dbReference type="CCDS" id="CCDS82250.1">
    <molecule id="Q9BZC1-2"/>
</dbReference>
<dbReference type="RefSeq" id="NP_001020258.1">
    <molecule id="Q9BZC1-4"/>
    <property type="nucleotide sequence ID" value="NM_001025087.2"/>
</dbReference>
<dbReference type="RefSeq" id="NP_001020259.1">
    <molecule id="Q9BZC1-3"/>
    <property type="nucleotide sequence ID" value="NM_001025088.2"/>
</dbReference>
<dbReference type="RefSeq" id="NP_001020260.1">
    <molecule id="Q9BZC1-5"/>
    <property type="nucleotide sequence ID" value="NM_001025089.2"/>
</dbReference>
<dbReference type="RefSeq" id="NP_001317532.1">
    <molecule id="Q9BZC1-2"/>
    <property type="nucleotide sequence ID" value="NM_001330603.2"/>
</dbReference>
<dbReference type="RefSeq" id="NP_064565.1">
    <molecule id="Q9BZC1-1"/>
    <property type="nucleotide sequence ID" value="NM_020180.4"/>
</dbReference>
<dbReference type="RefSeq" id="XP_047293595.1">
    <molecule id="Q9BZC1-1"/>
    <property type="nucleotide sequence ID" value="XM_047437639.1"/>
</dbReference>
<dbReference type="RefSeq" id="XP_047293600.1">
    <molecule id="Q9BZC1-2"/>
    <property type="nucleotide sequence ID" value="XM_047437644.1"/>
</dbReference>
<dbReference type="RefSeq" id="XP_047293618.1">
    <molecule id="Q9BZC1-5"/>
    <property type="nucleotide sequence ID" value="XM_047437662.1"/>
</dbReference>
<dbReference type="RefSeq" id="XP_054174800.1">
    <molecule id="Q9BZC1-1"/>
    <property type="nucleotide sequence ID" value="XM_054318825.1"/>
</dbReference>
<dbReference type="RefSeq" id="XP_054174805.1">
    <molecule id="Q9BZC1-2"/>
    <property type="nucleotide sequence ID" value="XM_054318830.1"/>
</dbReference>
<dbReference type="RefSeq" id="XP_054174823.1">
    <molecule id="Q9BZC1-5"/>
    <property type="nucleotide sequence ID" value="XM_054318848.1"/>
</dbReference>
<dbReference type="PDB" id="2DGP">
    <property type="method" value="NMR"/>
    <property type="chains" value="A=48-141"/>
</dbReference>
<dbReference type="PDB" id="2DNK">
    <property type="method" value="NMR"/>
    <property type="chains" value="A=143-235"/>
</dbReference>
<dbReference type="PDBsum" id="2DGP"/>
<dbReference type="PDBsum" id="2DNK"/>
<dbReference type="SMR" id="Q9BZC1"/>
<dbReference type="BioGRID" id="121213">
    <property type="interactions" value="10"/>
</dbReference>
<dbReference type="FunCoup" id="Q9BZC1">
    <property type="interactions" value="1679"/>
</dbReference>
<dbReference type="IntAct" id="Q9BZC1">
    <property type="interactions" value="4"/>
</dbReference>
<dbReference type="STRING" id="9606.ENSP00000410584"/>
<dbReference type="iPTMnet" id="Q9BZC1"/>
<dbReference type="PhosphoSitePlus" id="Q9BZC1"/>
<dbReference type="BioMuta" id="CELF4"/>
<dbReference type="DMDM" id="74761348"/>
<dbReference type="MassIVE" id="Q9BZC1"/>
<dbReference type="PaxDb" id="9606-ENSP00000410584"/>
<dbReference type="PeptideAtlas" id="Q9BZC1"/>
<dbReference type="ProteomicsDB" id="79804">
    <molecule id="Q9BZC1-1"/>
</dbReference>
<dbReference type="ProteomicsDB" id="79805">
    <molecule id="Q9BZC1-2"/>
</dbReference>
<dbReference type="ProteomicsDB" id="79806">
    <molecule id="Q9BZC1-3"/>
</dbReference>
<dbReference type="ProteomicsDB" id="79807">
    <molecule id="Q9BZC1-4"/>
</dbReference>
<dbReference type="ProteomicsDB" id="79808">
    <molecule id="Q9BZC1-5"/>
</dbReference>
<dbReference type="ABCD" id="Q9BZC1">
    <property type="antibodies" value="1 sequenced antibody"/>
</dbReference>
<dbReference type="Antibodypedia" id="22364">
    <property type="antibodies" value="77 antibodies from 18 providers"/>
</dbReference>
<dbReference type="DNASU" id="56853"/>
<dbReference type="Ensembl" id="ENST00000334919.9">
    <molecule id="Q9BZC1-5"/>
    <property type="protein sequence ID" value="ENSP00000335631.4"/>
    <property type="gene ID" value="ENSG00000101489.20"/>
</dbReference>
<dbReference type="Ensembl" id="ENST00000361795.9">
    <molecule id="Q9BZC1-3"/>
    <property type="protein sequence ID" value="ENSP00000355089.4"/>
    <property type="gene ID" value="ENSG00000101489.20"/>
</dbReference>
<dbReference type="Ensembl" id="ENST00000420428.7">
    <molecule id="Q9BZC1-1"/>
    <property type="protein sequence ID" value="ENSP00000410584.2"/>
    <property type="gene ID" value="ENSG00000101489.20"/>
</dbReference>
<dbReference type="Ensembl" id="ENST00000591282.5">
    <molecule id="Q9BZC1-1"/>
    <property type="protein sequence ID" value="ENSP00000464794.1"/>
    <property type="gene ID" value="ENSG00000101489.20"/>
</dbReference>
<dbReference type="Ensembl" id="ENST00000591287.5">
    <molecule id="Q9BZC1-2"/>
    <property type="protein sequence ID" value="ENSP00000464917.1"/>
    <property type="gene ID" value="ENSG00000101489.20"/>
</dbReference>
<dbReference type="Ensembl" id="ENST00000603232.6">
    <molecule id="Q9BZC1-4"/>
    <property type="protein sequence ID" value="ENSP00000474788.2"/>
    <property type="gene ID" value="ENSG00000101489.20"/>
</dbReference>
<dbReference type="GeneID" id="56853"/>
<dbReference type="KEGG" id="hsa:56853"/>
<dbReference type="MANE-Select" id="ENST00000420428.7">
    <property type="protein sequence ID" value="ENSP00000410584.2"/>
    <property type="RefSeq nucleotide sequence ID" value="NM_020180.4"/>
    <property type="RefSeq protein sequence ID" value="NP_064565.1"/>
</dbReference>
<dbReference type="UCSC" id="uc002lae.3">
    <molecule id="Q9BZC1-1"/>
    <property type="organism name" value="human"/>
</dbReference>
<dbReference type="AGR" id="HGNC:14015"/>
<dbReference type="CTD" id="56853"/>
<dbReference type="DisGeNET" id="56853"/>
<dbReference type="GeneCards" id="CELF4"/>
<dbReference type="HGNC" id="HGNC:14015">
    <property type="gene designation" value="CELF4"/>
</dbReference>
<dbReference type="HPA" id="ENSG00000101489">
    <property type="expression patterns" value="Tissue enhanced (brain, pituitary gland)"/>
</dbReference>
<dbReference type="MalaCards" id="CELF4"/>
<dbReference type="MIM" id="612679">
    <property type="type" value="gene"/>
</dbReference>
<dbReference type="neXtProt" id="NX_Q9BZC1"/>
<dbReference type="OpenTargets" id="ENSG00000101489"/>
<dbReference type="PharmGKB" id="PA25428"/>
<dbReference type="VEuPathDB" id="HostDB:ENSG00000101489"/>
<dbReference type="eggNOG" id="KOG0146">
    <property type="taxonomic scope" value="Eukaryota"/>
</dbReference>
<dbReference type="GeneTree" id="ENSGT00940000158673"/>
<dbReference type="HOGENOM" id="CLU_015367_0_1_1"/>
<dbReference type="InParanoid" id="Q9BZC1"/>
<dbReference type="OMA" id="FTGMHKX"/>
<dbReference type="OrthoDB" id="267048at2759"/>
<dbReference type="PAN-GO" id="Q9BZC1">
    <property type="GO annotations" value="6 GO annotations based on evolutionary models"/>
</dbReference>
<dbReference type="PhylomeDB" id="Q9BZC1"/>
<dbReference type="TreeFam" id="TF314924"/>
<dbReference type="PathwayCommons" id="Q9BZC1"/>
<dbReference type="SignaLink" id="Q9BZC1"/>
<dbReference type="SIGNOR" id="Q9BZC1"/>
<dbReference type="BioGRID-ORCS" id="56853">
    <property type="hits" value="9 hits in 1146 CRISPR screens"/>
</dbReference>
<dbReference type="ChiTaRS" id="CELF4">
    <property type="organism name" value="human"/>
</dbReference>
<dbReference type="EvolutionaryTrace" id="Q9BZC1"/>
<dbReference type="GeneWiki" id="BRUNOL4"/>
<dbReference type="GenomeRNAi" id="56853"/>
<dbReference type="Pharos" id="Q9BZC1">
    <property type="development level" value="Tbio"/>
</dbReference>
<dbReference type="PRO" id="PR:Q9BZC1"/>
<dbReference type="Proteomes" id="UP000005640">
    <property type="component" value="Chromosome 18"/>
</dbReference>
<dbReference type="RNAct" id="Q9BZC1">
    <property type="molecule type" value="protein"/>
</dbReference>
<dbReference type="Bgee" id="ENSG00000101489">
    <property type="expression patterns" value="Expressed in cerebellar cortex and 126 other cell types or tissues"/>
</dbReference>
<dbReference type="ExpressionAtlas" id="Q9BZC1">
    <property type="expression patterns" value="baseline and differential"/>
</dbReference>
<dbReference type="GO" id="GO:0005737">
    <property type="term" value="C:cytoplasm"/>
    <property type="evidence" value="ECO:0000318"/>
    <property type="project" value="GO_Central"/>
</dbReference>
<dbReference type="GO" id="GO:0005654">
    <property type="term" value="C:nucleoplasm"/>
    <property type="evidence" value="ECO:0000314"/>
    <property type="project" value="HPA"/>
</dbReference>
<dbReference type="GO" id="GO:0005634">
    <property type="term" value="C:nucleus"/>
    <property type="evidence" value="ECO:0000314"/>
    <property type="project" value="UniProtKB"/>
</dbReference>
<dbReference type="GO" id="GO:0098794">
    <property type="term" value="C:postsynapse"/>
    <property type="evidence" value="ECO:0007669"/>
    <property type="project" value="GOC"/>
</dbReference>
<dbReference type="GO" id="GO:1990904">
    <property type="term" value="C:ribonucleoprotein complex"/>
    <property type="evidence" value="ECO:0000318"/>
    <property type="project" value="GO_Central"/>
</dbReference>
<dbReference type="GO" id="GO:0042835">
    <property type="term" value="F:BRE binding"/>
    <property type="evidence" value="ECO:0000250"/>
    <property type="project" value="UniProtKB"/>
</dbReference>
<dbReference type="GO" id="GO:0003729">
    <property type="term" value="F:mRNA binding"/>
    <property type="evidence" value="ECO:0000318"/>
    <property type="project" value="GO_Central"/>
</dbReference>
<dbReference type="GO" id="GO:0000900">
    <property type="term" value="F:mRNA regulatory element binding translation repressor activity"/>
    <property type="evidence" value="ECO:0000303"/>
    <property type="project" value="UniProtKB"/>
</dbReference>
<dbReference type="GO" id="GO:0036002">
    <property type="term" value="F:pre-mRNA binding"/>
    <property type="evidence" value="ECO:0000314"/>
    <property type="project" value="UniProtKB"/>
</dbReference>
<dbReference type="GO" id="GO:0000380">
    <property type="term" value="P:alternative mRNA splicing, via spliceosome"/>
    <property type="evidence" value="ECO:0000314"/>
    <property type="project" value="MGI"/>
</dbReference>
<dbReference type="GO" id="GO:0009792">
    <property type="term" value="P:embryo development ending in birth or egg hatching"/>
    <property type="evidence" value="ECO:0000303"/>
    <property type="project" value="UniProtKB"/>
</dbReference>
<dbReference type="GO" id="GO:0060079">
    <property type="term" value="P:excitatory postsynaptic potential"/>
    <property type="evidence" value="ECO:0007669"/>
    <property type="project" value="Ensembl"/>
</dbReference>
<dbReference type="GO" id="GO:0007281">
    <property type="term" value="P:germ cell development"/>
    <property type="evidence" value="ECO:0000303"/>
    <property type="project" value="UniProtKB"/>
</dbReference>
<dbReference type="GO" id="GO:0001701">
    <property type="term" value="P:in utero embryonic development"/>
    <property type="evidence" value="ECO:0007669"/>
    <property type="project" value="Ensembl"/>
</dbReference>
<dbReference type="GO" id="GO:0006376">
    <property type="term" value="P:mRNA splice site recognition"/>
    <property type="evidence" value="ECO:0000318"/>
    <property type="project" value="GO_Central"/>
</dbReference>
<dbReference type="GO" id="GO:0090394">
    <property type="term" value="P:negative regulation of excitatory postsynaptic potential"/>
    <property type="evidence" value="ECO:0007669"/>
    <property type="project" value="Ensembl"/>
</dbReference>
<dbReference type="GO" id="GO:0048025">
    <property type="term" value="P:negative regulation of mRNA splicing, via spliceosome"/>
    <property type="evidence" value="ECO:0007669"/>
    <property type="project" value="Ensembl"/>
</dbReference>
<dbReference type="GO" id="GO:0048026">
    <property type="term" value="P:positive regulation of mRNA splicing, via spliceosome"/>
    <property type="evidence" value="ECO:0000314"/>
    <property type="project" value="UniProtKB"/>
</dbReference>
<dbReference type="GO" id="GO:0000381">
    <property type="term" value="P:regulation of alternative mRNA splicing, via spliceosome"/>
    <property type="evidence" value="ECO:0000314"/>
    <property type="project" value="UniProtKB"/>
</dbReference>
<dbReference type="GO" id="GO:1902866">
    <property type="term" value="P:regulation of retina development in camera-type eye"/>
    <property type="evidence" value="ECO:0007669"/>
    <property type="project" value="Ensembl"/>
</dbReference>
<dbReference type="CDD" id="cd12632">
    <property type="entry name" value="RRM1_CELF3_4_5_6"/>
    <property type="match status" value="1"/>
</dbReference>
<dbReference type="CDD" id="cd12635">
    <property type="entry name" value="RRM2_CELF3_4_5_6"/>
    <property type="match status" value="1"/>
</dbReference>
<dbReference type="FunFam" id="3.30.70.330:FF:000007">
    <property type="entry name" value="CUGBP Elav-like family member 4 isoform 3"/>
    <property type="match status" value="1"/>
</dbReference>
<dbReference type="FunFam" id="3.30.70.330:FF:000010">
    <property type="entry name" value="CUGBP Elav-like family member 4 isoform 3"/>
    <property type="match status" value="1"/>
</dbReference>
<dbReference type="FunFam" id="3.30.70.330:FF:000140">
    <property type="entry name" value="CUGBP Elav-like family member 4 isoform 3"/>
    <property type="match status" value="1"/>
</dbReference>
<dbReference type="Gene3D" id="3.30.70.330">
    <property type="match status" value="3"/>
</dbReference>
<dbReference type="InterPro" id="IPR034648">
    <property type="entry name" value="CELF3/4/5/6_RRM1"/>
</dbReference>
<dbReference type="InterPro" id="IPR012677">
    <property type="entry name" value="Nucleotide-bd_a/b_plait_sf"/>
</dbReference>
<dbReference type="InterPro" id="IPR035979">
    <property type="entry name" value="RBD_domain_sf"/>
</dbReference>
<dbReference type="InterPro" id="IPR000504">
    <property type="entry name" value="RRM_dom"/>
</dbReference>
<dbReference type="PANTHER" id="PTHR24012">
    <property type="entry name" value="RNA BINDING PROTEIN"/>
    <property type="match status" value="1"/>
</dbReference>
<dbReference type="Pfam" id="PF00076">
    <property type="entry name" value="RRM_1"/>
    <property type="match status" value="3"/>
</dbReference>
<dbReference type="SMART" id="SM00360">
    <property type="entry name" value="RRM"/>
    <property type="match status" value="3"/>
</dbReference>
<dbReference type="SUPFAM" id="SSF54928">
    <property type="entry name" value="RNA-binding domain, RBD"/>
    <property type="match status" value="2"/>
</dbReference>
<dbReference type="PROSITE" id="PS50102">
    <property type="entry name" value="RRM"/>
    <property type="match status" value="3"/>
</dbReference>